<name>CF141_HUMAN</name>
<evidence type="ECO:0000256" key="1">
    <source>
        <dbReference type="SAM" id="MobiDB-lite"/>
    </source>
</evidence>
<evidence type="ECO:0000269" key="2">
    <source>
    </source>
</evidence>
<evidence type="ECO:0000269" key="3">
    <source>
    </source>
</evidence>
<evidence type="ECO:0000269" key="4">
    <source>
    </source>
</evidence>
<evidence type="ECO:0000305" key="5"/>
<organism>
    <name type="scientific">Homo sapiens</name>
    <name type="common">Human</name>
    <dbReference type="NCBI Taxonomy" id="9606"/>
    <lineage>
        <taxon>Eukaryota</taxon>
        <taxon>Metazoa</taxon>
        <taxon>Chordata</taxon>
        <taxon>Craniata</taxon>
        <taxon>Vertebrata</taxon>
        <taxon>Euteleostomi</taxon>
        <taxon>Mammalia</taxon>
        <taxon>Eutheria</taxon>
        <taxon>Euarchontoglires</taxon>
        <taxon>Primates</taxon>
        <taxon>Haplorrhini</taxon>
        <taxon>Catarrhini</taxon>
        <taxon>Hominidae</taxon>
        <taxon>Homo</taxon>
    </lineage>
</organism>
<comment type="interaction">
    <interactant intactId="EBI-10697767">
        <id>Q5SZD1</id>
    </interactant>
    <interactant intactId="EBI-930964">
        <id>P54253</id>
        <label>ATXN1</label>
    </interactant>
    <organismsDiffer>false</organismsDiffer>
    <experiments>6</experiments>
</comment>
<comment type="interaction">
    <interactant intactId="EBI-10697767">
        <id>Q5SZD1</id>
    </interactant>
    <interactant intactId="EBI-744302">
        <id>P14136</id>
        <label>GFAP</label>
    </interactant>
    <organismsDiffer>false</organismsDiffer>
    <experiments>3</experiments>
</comment>
<comment type="interaction">
    <interactant intactId="EBI-10697767">
        <id>Q5SZD1</id>
    </interactant>
    <interactant intactId="EBI-1055254">
        <id>Q8WXH2</id>
        <label>JPH3</label>
    </interactant>
    <organismsDiffer>false</organismsDiffer>
    <experiments>3</experiments>
</comment>
<comment type="interaction">
    <interactant intactId="EBI-10697767">
        <id>Q5SZD1</id>
    </interactant>
    <interactant intactId="EBI-1391623">
        <id>P29474</id>
        <label>NOS3</label>
    </interactant>
    <organismsDiffer>false</organismsDiffer>
    <experiments>3</experiments>
</comment>
<comment type="interaction">
    <interactant intactId="EBI-10697767">
        <id>Q5SZD1</id>
    </interactant>
    <interactant intactId="EBI-368321">
        <id>O60437</id>
        <label>PPL</label>
    </interactant>
    <organismsDiffer>false</organismsDiffer>
    <experiments>3</experiments>
</comment>
<comment type="interaction">
    <interactant intactId="EBI-10697767">
        <id>Q5SZD1</id>
    </interactant>
    <interactant intactId="EBI-985879">
        <id>P37840</id>
        <label>SNCA</label>
    </interactant>
    <organismsDiffer>false</organismsDiffer>
    <experiments>3</experiments>
</comment>
<comment type="interaction">
    <interactant intactId="EBI-10697767">
        <id>Q5SZD1</id>
    </interactant>
    <interactant intactId="EBI-990792">
        <id>P00441</id>
        <label>SOD1</label>
    </interactant>
    <organismsDiffer>false</organismsDiffer>
    <experiments>3</experiments>
</comment>
<comment type="interaction">
    <interactant intactId="EBI-10697767">
        <id>Q5SZD1</id>
    </interactant>
    <interactant intactId="EBI-372899">
        <id>Q13148</id>
        <label>TARDBP</label>
    </interactant>
    <organismsDiffer>false</organismsDiffer>
    <experiments>6</experiments>
</comment>
<comment type="sequence caution" evidence="5">
    <conflict type="erroneous initiation">
        <sequence resource="EMBL-CDS" id="AAH36917"/>
    </conflict>
    <text>Extended N-terminus.</text>
</comment>
<protein>
    <recommendedName>
        <fullName>Uncharacterized protein C6orf141</fullName>
    </recommendedName>
</protein>
<sequence length="244" mass="26754">MNDPFARMETRGPQGAANPMDSSRSLGDLGPFPREVGRGAPLAPGARNPATAGASRSQGGGHEDRTADRALGPRAGEELDRESWVREKVLFLLHPERWLGTRGDPAREEVAGAEDLPHAGGEDHGEEPNYPSVFQRQKRISGRRVAPPRDAADPPKYVLVRVEDYQVTQEVLQTSWAKGRMTTRTEEHFVTALTFRSSREGQPGERWGPAESRALQARTGASRVHAAGRRVSPSPGTWLEEIKL</sequence>
<gene>
    <name type="primary">C6orf141</name>
</gene>
<feature type="chain" id="PRO_0000089537" description="Uncharacterized protein C6orf141">
    <location>
        <begin position="1"/>
        <end position="244"/>
    </location>
</feature>
<feature type="region of interest" description="Disordered" evidence="1">
    <location>
        <begin position="1"/>
        <end position="79"/>
    </location>
</feature>
<feature type="region of interest" description="Disordered" evidence="1">
    <location>
        <begin position="100"/>
        <end position="130"/>
    </location>
</feature>
<feature type="region of interest" description="Disordered" evidence="1">
    <location>
        <begin position="219"/>
        <end position="244"/>
    </location>
</feature>
<feature type="compositionally biased region" description="Basic and acidic residues" evidence="1">
    <location>
        <begin position="1"/>
        <end position="10"/>
    </location>
</feature>
<feature type="compositionally biased region" description="Basic and acidic residues" evidence="1">
    <location>
        <begin position="100"/>
        <end position="127"/>
    </location>
</feature>
<feature type="sequence variant" id="VAR_022939" description="In dbSNP:rs6919674." evidence="2 3 4">
    <original>Q</original>
    <variation>E</variation>
    <location>
        <position position="137"/>
    </location>
</feature>
<feature type="sequence variant" id="VAR_030643" description="In dbSNP:rs9473588.">
    <original>P</original>
    <variation>L</variation>
    <location>
        <position position="235"/>
    </location>
</feature>
<reference key="1">
    <citation type="journal article" date="2004" name="Nat. Genet.">
        <title>Complete sequencing and characterization of 21,243 full-length human cDNAs.</title>
        <authorList>
            <person name="Ota T."/>
            <person name="Suzuki Y."/>
            <person name="Nishikawa T."/>
            <person name="Otsuki T."/>
            <person name="Sugiyama T."/>
            <person name="Irie R."/>
            <person name="Wakamatsu A."/>
            <person name="Hayashi K."/>
            <person name="Sato H."/>
            <person name="Nagai K."/>
            <person name="Kimura K."/>
            <person name="Makita H."/>
            <person name="Sekine M."/>
            <person name="Obayashi M."/>
            <person name="Nishi T."/>
            <person name="Shibahara T."/>
            <person name="Tanaka T."/>
            <person name="Ishii S."/>
            <person name="Yamamoto J."/>
            <person name="Saito K."/>
            <person name="Kawai Y."/>
            <person name="Isono Y."/>
            <person name="Nakamura Y."/>
            <person name="Nagahari K."/>
            <person name="Murakami K."/>
            <person name="Yasuda T."/>
            <person name="Iwayanagi T."/>
            <person name="Wagatsuma M."/>
            <person name="Shiratori A."/>
            <person name="Sudo H."/>
            <person name="Hosoiri T."/>
            <person name="Kaku Y."/>
            <person name="Kodaira H."/>
            <person name="Kondo H."/>
            <person name="Sugawara M."/>
            <person name="Takahashi M."/>
            <person name="Kanda K."/>
            <person name="Yokoi T."/>
            <person name="Furuya T."/>
            <person name="Kikkawa E."/>
            <person name="Omura Y."/>
            <person name="Abe K."/>
            <person name="Kamihara K."/>
            <person name="Katsuta N."/>
            <person name="Sato K."/>
            <person name="Tanikawa M."/>
            <person name="Yamazaki M."/>
            <person name="Ninomiya K."/>
            <person name="Ishibashi T."/>
            <person name="Yamashita H."/>
            <person name="Murakawa K."/>
            <person name="Fujimori K."/>
            <person name="Tanai H."/>
            <person name="Kimata M."/>
            <person name="Watanabe M."/>
            <person name="Hiraoka S."/>
            <person name="Chiba Y."/>
            <person name="Ishida S."/>
            <person name="Ono Y."/>
            <person name="Takiguchi S."/>
            <person name="Watanabe S."/>
            <person name="Yosida M."/>
            <person name="Hotuta T."/>
            <person name="Kusano J."/>
            <person name="Kanehori K."/>
            <person name="Takahashi-Fujii A."/>
            <person name="Hara H."/>
            <person name="Tanase T.-O."/>
            <person name="Nomura Y."/>
            <person name="Togiya S."/>
            <person name="Komai F."/>
            <person name="Hara R."/>
            <person name="Takeuchi K."/>
            <person name="Arita M."/>
            <person name="Imose N."/>
            <person name="Musashino K."/>
            <person name="Yuuki H."/>
            <person name="Oshima A."/>
            <person name="Sasaki N."/>
            <person name="Aotsuka S."/>
            <person name="Yoshikawa Y."/>
            <person name="Matsunawa H."/>
            <person name="Ichihara T."/>
            <person name="Shiohata N."/>
            <person name="Sano S."/>
            <person name="Moriya S."/>
            <person name="Momiyama H."/>
            <person name="Satoh N."/>
            <person name="Takami S."/>
            <person name="Terashima Y."/>
            <person name="Suzuki O."/>
            <person name="Nakagawa S."/>
            <person name="Senoh A."/>
            <person name="Mizoguchi H."/>
            <person name="Goto Y."/>
            <person name="Shimizu F."/>
            <person name="Wakebe H."/>
            <person name="Hishigaki H."/>
            <person name="Watanabe T."/>
            <person name="Sugiyama A."/>
            <person name="Takemoto M."/>
            <person name="Kawakami B."/>
            <person name="Yamazaki M."/>
            <person name="Watanabe K."/>
            <person name="Kumagai A."/>
            <person name="Itakura S."/>
            <person name="Fukuzumi Y."/>
            <person name="Fujimori Y."/>
            <person name="Komiyama M."/>
            <person name="Tashiro H."/>
            <person name="Tanigami A."/>
            <person name="Fujiwara T."/>
            <person name="Ono T."/>
            <person name="Yamada K."/>
            <person name="Fujii Y."/>
            <person name="Ozaki K."/>
            <person name="Hirao M."/>
            <person name="Ohmori Y."/>
            <person name="Kawabata A."/>
            <person name="Hikiji T."/>
            <person name="Kobatake N."/>
            <person name="Inagaki H."/>
            <person name="Ikema Y."/>
            <person name="Okamoto S."/>
            <person name="Okitani R."/>
            <person name="Kawakami T."/>
            <person name="Noguchi S."/>
            <person name="Itoh T."/>
            <person name="Shigeta K."/>
            <person name="Senba T."/>
            <person name="Matsumura K."/>
            <person name="Nakajima Y."/>
            <person name="Mizuno T."/>
            <person name="Morinaga M."/>
            <person name="Sasaki M."/>
            <person name="Togashi T."/>
            <person name="Oyama M."/>
            <person name="Hata H."/>
            <person name="Watanabe M."/>
            <person name="Komatsu T."/>
            <person name="Mizushima-Sugano J."/>
            <person name="Satoh T."/>
            <person name="Shirai Y."/>
            <person name="Takahashi Y."/>
            <person name="Nakagawa K."/>
            <person name="Okumura K."/>
            <person name="Nagase T."/>
            <person name="Nomura N."/>
            <person name="Kikuchi H."/>
            <person name="Masuho Y."/>
            <person name="Yamashita R."/>
            <person name="Nakai K."/>
            <person name="Yada T."/>
            <person name="Nakamura Y."/>
            <person name="Ohara O."/>
            <person name="Isogai T."/>
            <person name="Sugano S."/>
        </authorList>
    </citation>
    <scope>NUCLEOTIDE SEQUENCE [LARGE SCALE MRNA]</scope>
    <scope>VARIANT GLU-137</scope>
    <source>
        <tissue>Cerebellum</tissue>
        <tissue>Corpus callosum</tissue>
    </source>
</reference>
<reference key="2">
    <citation type="journal article" date="2003" name="Nature">
        <title>The DNA sequence and analysis of human chromosome 6.</title>
        <authorList>
            <person name="Mungall A.J."/>
            <person name="Palmer S.A."/>
            <person name="Sims S.K."/>
            <person name="Edwards C.A."/>
            <person name="Ashurst J.L."/>
            <person name="Wilming L."/>
            <person name="Jones M.C."/>
            <person name="Horton R."/>
            <person name="Hunt S.E."/>
            <person name="Scott C.E."/>
            <person name="Gilbert J.G.R."/>
            <person name="Clamp M.E."/>
            <person name="Bethel G."/>
            <person name="Milne S."/>
            <person name="Ainscough R."/>
            <person name="Almeida J.P."/>
            <person name="Ambrose K.D."/>
            <person name="Andrews T.D."/>
            <person name="Ashwell R.I.S."/>
            <person name="Babbage A.K."/>
            <person name="Bagguley C.L."/>
            <person name="Bailey J."/>
            <person name="Banerjee R."/>
            <person name="Barker D.J."/>
            <person name="Barlow K.F."/>
            <person name="Bates K."/>
            <person name="Beare D.M."/>
            <person name="Beasley H."/>
            <person name="Beasley O."/>
            <person name="Bird C.P."/>
            <person name="Blakey S.E."/>
            <person name="Bray-Allen S."/>
            <person name="Brook J."/>
            <person name="Brown A.J."/>
            <person name="Brown J.Y."/>
            <person name="Burford D.C."/>
            <person name="Burrill W."/>
            <person name="Burton J."/>
            <person name="Carder C."/>
            <person name="Carter N.P."/>
            <person name="Chapman J.C."/>
            <person name="Clark S.Y."/>
            <person name="Clark G."/>
            <person name="Clee C.M."/>
            <person name="Clegg S."/>
            <person name="Cobley V."/>
            <person name="Collier R.E."/>
            <person name="Collins J.E."/>
            <person name="Colman L.K."/>
            <person name="Corby N.R."/>
            <person name="Coville G.J."/>
            <person name="Culley K.M."/>
            <person name="Dhami P."/>
            <person name="Davies J."/>
            <person name="Dunn M."/>
            <person name="Earthrowl M.E."/>
            <person name="Ellington A.E."/>
            <person name="Evans K.A."/>
            <person name="Faulkner L."/>
            <person name="Francis M.D."/>
            <person name="Frankish A."/>
            <person name="Frankland J."/>
            <person name="French L."/>
            <person name="Garner P."/>
            <person name="Garnett J."/>
            <person name="Ghori M.J."/>
            <person name="Gilby L.M."/>
            <person name="Gillson C.J."/>
            <person name="Glithero R.J."/>
            <person name="Grafham D.V."/>
            <person name="Grant M."/>
            <person name="Gribble S."/>
            <person name="Griffiths C."/>
            <person name="Griffiths M.N.D."/>
            <person name="Hall R."/>
            <person name="Halls K.S."/>
            <person name="Hammond S."/>
            <person name="Harley J.L."/>
            <person name="Hart E.A."/>
            <person name="Heath P.D."/>
            <person name="Heathcott R."/>
            <person name="Holmes S.J."/>
            <person name="Howden P.J."/>
            <person name="Howe K.L."/>
            <person name="Howell G.R."/>
            <person name="Huckle E."/>
            <person name="Humphray S.J."/>
            <person name="Humphries M.D."/>
            <person name="Hunt A.R."/>
            <person name="Johnson C.M."/>
            <person name="Joy A.A."/>
            <person name="Kay M."/>
            <person name="Keenan S.J."/>
            <person name="Kimberley A.M."/>
            <person name="King A."/>
            <person name="Laird G.K."/>
            <person name="Langford C."/>
            <person name="Lawlor S."/>
            <person name="Leongamornlert D.A."/>
            <person name="Leversha M."/>
            <person name="Lloyd C.R."/>
            <person name="Lloyd D.M."/>
            <person name="Loveland J.E."/>
            <person name="Lovell J."/>
            <person name="Martin S."/>
            <person name="Mashreghi-Mohammadi M."/>
            <person name="Maslen G.L."/>
            <person name="Matthews L."/>
            <person name="McCann O.T."/>
            <person name="McLaren S.J."/>
            <person name="McLay K."/>
            <person name="McMurray A."/>
            <person name="Moore M.J.F."/>
            <person name="Mullikin J.C."/>
            <person name="Niblett D."/>
            <person name="Nickerson T."/>
            <person name="Novik K.L."/>
            <person name="Oliver K."/>
            <person name="Overton-Larty E.K."/>
            <person name="Parker A."/>
            <person name="Patel R."/>
            <person name="Pearce A.V."/>
            <person name="Peck A.I."/>
            <person name="Phillimore B.J.C.T."/>
            <person name="Phillips S."/>
            <person name="Plumb R.W."/>
            <person name="Porter K.M."/>
            <person name="Ramsey Y."/>
            <person name="Ranby S.A."/>
            <person name="Rice C.M."/>
            <person name="Ross M.T."/>
            <person name="Searle S.M."/>
            <person name="Sehra H.K."/>
            <person name="Sheridan E."/>
            <person name="Skuce C.D."/>
            <person name="Smith S."/>
            <person name="Smith M."/>
            <person name="Spraggon L."/>
            <person name="Squares S.L."/>
            <person name="Steward C.A."/>
            <person name="Sycamore N."/>
            <person name="Tamlyn-Hall G."/>
            <person name="Tester J."/>
            <person name="Theaker A.J."/>
            <person name="Thomas D.W."/>
            <person name="Thorpe A."/>
            <person name="Tracey A."/>
            <person name="Tromans A."/>
            <person name="Tubby B."/>
            <person name="Wall M."/>
            <person name="Wallis J.M."/>
            <person name="West A.P."/>
            <person name="White S.S."/>
            <person name="Whitehead S.L."/>
            <person name="Whittaker H."/>
            <person name="Wild A."/>
            <person name="Willey D.J."/>
            <person name="Wilmer T.E."/>
            <person name="Wood J.M."/>
            <person name="Wray P.W."/>
            <person name="Wyatt J.C."/>
            <person name="Young L."/>
            <person name="Younger R.M."/>
            <person name="Bentley D.R."/>
            <person name="Coulson A."/>
            <person name="Durbin R.M."/>
            <person name="Hubbard T."/>
            <person name="Sulston J.E."/>
            <person name="Dunham I."/>
            <person name="Rogers J."/>
            <person name="Beck S."/>
        </authorList>
    </citation>
    <scope>NUCLEOTIDE SEQUENCE [LARGE SCALE GENOMIC DNA]</scope>
    <scope>VARIANT GLU-137</scope>
</reference>
<reference key="3">
    <citation type="submission" date="2005-07" db="EMBL/GenBank/DDBJ databases">
        <authorList>
            <person name="Mural R.J."/>
            <person name="Istrail S."/>
            <person name="Sutton G.G."/>
            <person name="Florea L."/>
            <person name="Halpern A.L."/>
            <person name="Mobarry C.M."/>
            <person name="Lippert R."/>
            <person name="Walenz B."/>
            <person name="Shatkay H."/>
            <person name="Dew I."/>
            <person name="Miller J.R."/>
            <person name="Flanigan M.J."/>
            <person name="Edwards N.J."/>
            <person name="Bolanos R."/>
            <person name="Fasulo D."/>
            <person name="Halldorsson B.V."/>
            <person name="Hannenhalli S."/>
            <person name="Turner R."/>
            <person name="Yooseph S."/>
            <person name="Lu F."/>
            <person name="Nusskern D.R."/>
            <person name="Shue B.C."/>
            <person name="Zheng X.H."/>
            <person name="Zhong F."/>
            <person name="Delcher A.L."/>
            <person name="Huson D.H."/>
            <person name="Kravitz S.A."/>
            <person name="Mouchard L."/>
            <person name="Reinert K."/>
            <person name="Remington K.A."/>
            <person name="Clark A.G."/>
            <person name="Waterman M.S."/>
            <person name="Eichler E.E."/>
            <person name="Adams M.D."/>
            <person name="Hunkapiller M.W."/>
            <person name="Myers E.W."/>
            <person name="Venter J.C."/>
        </authorList>
    </citation>
    <scope>NUCLEOTIDE SEQUENCE [LARGE SCALE GENOMIC DNA]</scope>
</reference>
<reference key="4">
    <citation type="journal article" date="2004" name="Genome Res.">
        <title>The status, quality, and expansion of the NIH full-length cDNA project: the Mammalian Gene Collection (MGC).</title>
        <authorList>
            <consortium name="The MGC Project Team"/>
        </authorList>
    </citation>
    <scope>NUCLEOTIDE SEQUENCE [LARGE SCALE MRNA]</scope>
    <scope>VARIANT GLU-137</scope>
    <source>
        <tissue>Lung</tissue>
    </source>
</reference>
<keyword id="KW-1267">Proteomics identification</keyword>
<keyword id="KW-1185">Reference proteome</keyword>
<proteinExistence type="evidence at protein level"/>
<accession>Q5SZD1</accession>
<accession>A8K1H4</accession>
<accession>Q8N400</accession>
<accession>Q96NQ1</accession>
<dbReference type="EMBL" id="AK054918">
    <property type="protein sequence ID" value="BAB70828.1"/>
    <property type="molecule type" value="mRNA"/>
</dbReference>
<dbReference type="EMBL" id="AK289889">
    <property type="protein sequence ID" value="BAF82578.1"/>
    <property type="molecule type" value="mRNA"/>
</dbReference>
<dbReference type="EMBL" id="AL590244">
    <property type="status" value="NOT_ANNOTATED_CDS"/>
    <property type="molecule type" value="Genomic_DNA"/>
</dbReference>
<dbReference type="EMBL" id="CH471081">
    <property type="protein sequence ID" value="EAX04335.1"/>
    <property type="molecule type" value="Genomic_DNA"/>
</dbReference>
<dbReference type="EMBL" id="BC036917">
    <property type="protein sequence ID" value="AAH36917.1"/>
    <property type="status" value="ALT_INIT"/>
    <property type="molecule type" value="mRNA"/>
</dbReference>
<dbReference type="CCDS" id="CCDS55018.1"/>
<dbReference type="RefSeq" id="NP_001139124.2">
    <property type="nucleotide sequence ID" value="NM_001145652.2"/>
</dbReference>
<dbReference type="RefSeq" id="XP_005248907.1">
    <property type="nucleotide sequence ID" value="XM_005248850.4"/>
</dbReference>
<dbReference type="RefSeq" id="XP_005248909.1">
    <property type="nucleotide sequence ID" value="XM_005248852.2"/>
</dbReference>
<dbReference type="RefSeq" id="XP_005248910.1">
    <property type="nucleotide sequence ID" value="XM_005248853.3"/>
</dbReference>
<dbReference type="RefSeq" id="XP_006715060.1">
    <property type="nucleotide sequence ID" value="XM_006714997.3"/>
</dbReference>
<dbReference type="RefSeq" id="XP_011512605.1">
    <property type="nucleotide sequence ID" value="XM_011514303.2"/>
</dbReference>
<dbReference type="RefSeq" id="XP_016865783.1">
    <property type="nucleotide sequence ID" value="XM_017010294.1"/>
</dbReference>
<dbReference type="RefSeq" id="XP_016865784.1">
    <property type="nucleotide sequence ID" value="XM_017010295.1"/>
</dbReference>
<dbReference type="RefSeq" id="XP_016865785.1">
    <property type="nucleotide sequence ID" value="XM_017010296.1"/>
</dbReference>
<dbReference type="RefSeq" id="XP_016865786.1">
    <property type="nucleotide sequence ID" value="XM_017010297.1"/>
</dbReference>
<dbReference type="RefSeq" id="XP_016865787.1">
    <property type="nucleotide sequence ID" value="XM_017010298.1"/>
</dbReference>
<dbReference type="RefSeq" id="XP_047274181.1">
    <property type="nucleotide sequence ID" value="XM_047418225.1"/>
</dbReference>
<dbReference type="RefSeq" id="XP_047274182.1">
    <property type="nucleotide sequence ID" value="XM_047418226.1"/>
</dbReference>
<dbReference type="RefSeq" id="XP_047274183.1">
    <property type="nucleotide sequence ID" value="XM_047418227.1"/>
</dbReference>
<dbReference type="RefSeq" id="XP_047274184.1">
    <property type="nucleotide sequence ID" value="XM_047418228.1"/>
</dbReference>
<dbReference type="RefSeq" id="XP_047274185.1">
    <property type="nucleotide sequence ID" value="XM_047418229.1"/>
</dbReference>
<dbReference type="RefSeq" id="XP_047274186.1">
    <property type="nucleotide sequence ID" value="XM_047418230.1"/>
</dbReference>
<dbReference type="RefSeq" id="XP_047274187.1">
    <property type="nucleotide sequence ID" value="XM_047418231.1"/>
</dbReference>
<dbReference type="BioGRID" id="126429">
    <property type="interactions" value="94"/>
</dbReference>
<dbReference type="FunCoup" id="Q5SZD1">
    <property type="interactions" value="75"/>
</dbReference>
<dbReference type="IntAct" id="Q5SZD1">
    <property type="interactions" value="97"/>
</dbReference>
<dbReference type="STRING" id="9606.ENSP00000434602"/>
<dbReference type="iPTMnet" id="Q5SZD1"/>
<dbReference type="PhosphoSitePlus" id="Q5SZD1"/>
<dbReference type="BioMuta" id="C6orf141"/>
<dbReference type="DMDM" id="317373454"/>
<dbReference type="jPOST" id="Q5SZD1"/>
<dbReference type="MassIVE" id="Q5SZD1"/>
<dbReference type="PaxDb" id="9606-ENSP00000434602"/>
<dbReference type="PeptideAtlas" id="Q5SZD1"/>
<dbReference type="ProteomicsDB" id="64054"/>
<dbReference type="Antibodypedia" id="65113">
    <property type="antibodies" value="33 antibodies from 10 providers"/>
</dbReference>
<dbReference type="DNASU" id="135398"/>
<dbReference type="Ensembl" id="ENST00000371194.7">
    <property type="protein sequence ID" value="ENSP00000431184.1"/>
    <property type="gene ID" value="ENSG00000197261.12"/>
</dbReference>
<dbReference type="Ensembl" id="ENST00000414696.5">
    <property type="protein sequence ID" value="ENSP00000436754.1"/>
    <property type="gene ID" value="ENSG00000197261.12"/>
</dbReference>
<dbReference type="Ensembl" id="ENST00000529246.4">
    <property type="protein sequence ID" value="ENSP00000434602.2"/>
    <property type="gene ID" value="ENSG00000197261.12"/>
</dbReference>
<dbReference type="GeneID" id="135398"/>
<dbReference type="KEGG" id="hsa:135398"/>
<dbReference type="MANE-Select" id="ENST00000529246.4">
    <property type="protein sequence ID" value="ENSP00000434602.2"/>
    <property type="RefSeq nucleotide sequence ID" value="NM_001145652.2"/>
    <property type="RefSeq protein sequence ID" value="NP_001139124.2"/>
</dbReference>
<dbReference type="UCSC" id="uc011dwo.3">
    <property type="organism name" value="human"/>
</dbReference>
<dbReference type="AGR" id="HGNC:21351"/>
<dbReference type="CTD" id="135398"/>
<dbReference type="DisGeNET" id="135398"/>
<dbReference type="GeneCards" id="C6orf141"/>
<dbReference type="HGNC" id="HGNC:21351">
    <property type="gene designation" value="C6orf141"/>
</dbReference>
<dbReference type="HPA" id="ENSG00000197261">
    <property type="expression patterns" value="Tissue enhanced (brain)"/>
</dbReference>
<dbReference type="neXtProt" id="NX_Q5SZD1"/>
<dbReference type="OpenTargets" id="ENSG00000197261"/>
<dbReference type="PharmGKB" id="PA134885117"/>
<dbReference type="VEuPathDB" id="HostDB:ENSG00000197261"/>
<dbReference type="eggNOG" id="ENOG502SVK6">
    <property type="taxonomic scope" value="Eukaryota"/>
</dbReference>
<dbReference type="GeneTree" id="ENSGT00390000007738"/>
<dbReference type="HOGENOM" id="CLU_099670_0_0_1"/>
<dbReference type="InParanoid" id="Q5SZD1"/>
<dbReference type="OMA" id="VRIVDYQ"/>
<dbReference type="OrthoDB" id="9447330at2759"/>
<dbReference type="PAN-GO" id="Q5SZD1">
    <property type="GO annotations" value="0 GO annotations based on evolutionary models"/>
</dbReference>
<dbReference type="PhylomeDB" id="Q5SZD1"/>
<dbReference type="TreeFam" id="TF336881"/>
<dbReference type="PathwayCommons" id="Q5SZD1"/>
<dbReference type="SignaLink" id="Q5SZD1"/>
<dbReference type="BioGRID-ORCS" id="135398">
    <property type="hits" value="10 hits in 1124 CRISPR screens"/>
</dbReference>
<dbReference type="GenomeRNAi" id="135398"/>
<dbReference type="Pharos" id="Q5SZD1">
    <property type="development level" value="Tdark"/>
</dbReference>
<dbReference type="PRO" id="PR:Q5SZD1"/>
<dbReference type="Proteomes" id="UP000005640">
    <property type="component" value="Chromosome 6"/>
</dbReference>
<dbReference type="RNAct" id="Q5SZD1">
    <property type="molecule type" value="protein"/>
</dbReference>
<dbReference type="Bgee" id="ENSG00000197261">
    <property type="expression patterns" value="Expressed in gall bladder and 121 other cell types or tissues"/>
</dbReference>
<dbReference type="ExpressionAtlas" id="Q5SZD1">
    <property type="expression patterns" value="baseline and differential"/>
</dbReference>
<dbReference type="InterPro" id="IPR037739">
    <property type="entry name" value="C6orf141"/>
</dbReference>
<dbReference type="PANTHER" id="PTHR36880">
    <property type="entry name" value="9130008F23RIK PROTEIN"/>
    <property type="match status" value="1"/>
</dbReference>
<dbReference type="PANTHER" id="PTHR36880:SF1">
    <property type="entry name" value="9130008F23RIK PROTEIN"/>
    <property type="match status" value="1"/>
</dbReference>